<name>RS4_JANMA</name>
<comment type="function">
    <text evidence="1">One of the primary rRNA binding proteins, it binds directly to 16S rRNA where it nucleates assembly of the body of the 30S subunit.</text>
</comment>
<comment type="function">
    <text evidence="1">With S5 and S12 plays an important role in translational accuracy.</text>
</comment>
<comment type="subunit">
    <text evidence="1">Part of the 30S ribosomal subunit. Contacts protein S5. The interaction surface between S4 and S5 is involved in control of translational fidelity.</text>
</comment>
<comment type="similarity">
    <text evidence="1">Belongs to the universal ribosomal protein uS4 family.</text>
</comment>
<feature type="chain" id="PRO_0000322306" description="Small ribosomal subunit protein uS4">
    <location>
        <begin position="1"/>
        <end position="207"/>
    </location>
</feature>
<feature type="domain" description="S4 RNA-binding" evidence="1">
    <location>
        <begin position="97"/>
        <end position="157"/>
    </location>
</feature>
<feature type="region of interest" description="Disordered" evidence="2">
    <location>
        <begin position="31"/>
        <end position="56"/>
    </location>
</feature>
<feature type="compositionally biased region" description="Polar residues" evidence="2">
    <location>
        <begin position="42"/>
        <end position="53"/>
    </location>
</feature>
<dbReference type="EMBL" id="CP000269">
    <property type="protein sequence ID" value="ABR88890.1"/>
    <property type="molecule type" value="Genomic_DNA"/>
</dbReference>
<dbReference type="RefSeq" id="WP_012081229.1">
    <property type="nucleotide sequence ID" value="NC_009659.1"/>
</dbReference>
<dbReference type="SMR" id="A6T3H9"/>
<dbReference type="STRING" id="375286.mma_3386"/>
<dbReference type="KEGG" id="mms:mma_3386"/>
<dbReference type="eggNOG" id="COG0522">
    <property type="taxonomic scope" value="Bacteria"/>
</dbReference>
<dbReference type="HOGENOM" id="CLU_092403_0_2_4"/>
<dbReference type="OrthoDB" id="9803672at2"/>
<dbReference type="Proteomes" id="UP000006388">
    <property type="component" value="Chromosome"/>
</dbReference>
<dbReference type="GO" id="GO:0015935">
    <property type="term" value="C:small ribosomal subunit"/>
    <property type="evidence" value="ECO:0007669"/>
    <property type="project" value="InterPro"/>
</dbReference>
<dbReference type="GO" id="GO:0019843">
    <property type="term" value="F:rRNA binding"/>
    <property type="evidence" value="ECO:0007669"/>
    <property type="project" value="UniProtKB-UniRule"/>
</dbReference>
<dbReference type="GO" id="GO:0003735">
    <property type="term" value="F:structural constituent of ribosome"/>
    <property type="evidence" value="ECO:0007669"/>
    <property type="project" value="InterPro"/>
</dbReference>
<dbReference type="GO" id="GO:0042274">
    <property type="term" value="P:ribosomal small subunit biogenesis"/>
    <property type="evidence" value="ECO:0007669"/>
    <property type="project" value="TreeGrafter"/>
</dbReference>
<dbReference type="GO" id="GO:0006412">
    <property type="term" value="P:translation"/>
    <property type="evidence" value="ECO:0007669"/>
    <property type="project" value="UniProtKB-UniRule"/>
</dbReference>
<dbReference type="CDD" id="cd00165">
    <property type="entry name" value="S4"/>
    <property type="match status" value="1"/>
</dbReference>
<dbReference type="FunFam" id="1.10.1050.10:FF:000001">
    <property type="entry name" value="30S ribosomal protein S4"/>
    <property type="match status" value="1"/>
</dbReference>
<dbReference type="FunFam" id="3.10.290.10:FF:000001">
    <property type="entry name" value="30S ribosomal protein S4"/>
    <property type="match status" value="1"/>
</dbReference>
<dbReference type="Gene3D" id="1.10.1050.10">
    <property type="entry name" value="Ribosomal Protein S4 Delta 41, Chain A, domain 1"/>
    <property type="match status" value="1"/>
</dbReference>
<dbReference type="Gene3D" id="3.10.290.10">
    <property type="entry name" value="RNA-binding S4 domain"/>
    <property type="match status" value="1"/>
</dbReference>
<dbReference type="HAMAP" id="MF_01306_B">
    <property type="entry name" value="Ribosomal_uS4_B"/>
    <property type="match status" value="1"/>
</dbReference>
<dbReference type="InterPro" id="IPR022801">
    <property type="entry name" value="Ribosomal_uS4"/>
</dbReference>
<dbReference type="InterPro" id="IPR005709">
    <property type="entry name" value="Ribosomal_uS4_bac-type"/>
</dbReference>
<dbReference type="InterPro" id="IPR001912">
    <property type="entry name" value="Ribosomal_uS4_N"/>
</dbReference>
<dbReference type="InterPro" id="IPR002942">
    <property type="entry name" value="S4_RNA-bd"/>
</dbReference>
<dbReference type="InterPro" id="IPR036986">
    <property type="entry name" value="S4_RNA-bd_sf"/>
</dbReference>
<dbReference type="NCBIfam" id="NF003717">
    <property type="entry name" value="PRK05327.1"/>
    <property type="match status" value="1"/>
</dbReference>
<dbReference type="NCBIfam" id="TIGR01017">
    <property type="entry name" value="rpsD_bact"/>
    <property type="match status" value="1"/>
</dbReference>
<dbReference type="PANTHER" id="PTHR11831">
    <property type="entry name" value="30S 40S RIBOSOMAL PROTEIN"/>
    <property type="match status" value="1"/>
</dbReference>
<dbReference type="PANTHER" id="PTHR11831:SF4">
    <property type="entry name" value="SMALL RIBOSOMAL SUBUNIT PROTEIN US4M"/>
    <property type="match status" value="1"/>
</dbReference>
<dbReference type="Pfam" id="PF00163">
    <property type="entry name" value="Ribosomal_S4"/>
    <property type="match status" value="1"/>
</dbReference>
<dbReference type="Pfam" id="PF01479">
    <property type="entry name" value="S4"/>
    <property type="match status" value="1"/>
</dbReference>
<dbReference type="SMART" id="SM01390">
    <property type="entry name" value="Ribosomal_S4"/>
    <property type="match status" value="1"/>
</dbReference>
<dbReference type="SMART" id="SM00363">
    <property type="entry name" value="S4"/>
    <property type="match status" value="1"/>
</dbReference>
<dbReference type="SUPFAM" id="SSF55174">
    <property type="entry name" value="Alpha-L RNA-binding motif"/>
    <property type="match status" value="1"/>
</dbReference>
<dbReference type="PROSITE" id="PS50889">
    <property type="entry name" value="S4"/>
    <property type="match status" value="1"/>
</dbReference>
<proteinExistence type="inferred from homology"/>
<reference key="1">
    <citation type="journal article" date="2007" name="PLoS Genet.">
        <title>Genome analysis of Minibacterium massiliensis highlights the convergent evolution of water-living bacteria.</title>
        <authorList>
            <person name="Audic S."/>
            <person name="Robert C."/>
            <person name="Campagna B."/>
            <person name="Parinello H."/>
            <person name="Claverie J.-M."/>
            <person name="Raoult D."/>
            <person name="Drancourt M."/>
        </authorList>
    </citation>
    <scope>NUCLEOTIDE SEQUENCE [LARGE SCALE GENOMIC DNA]</scope>
    <source>
        <strain>Marseille</strain>
    </source>
</reference>
<sequence length="207" mass="23331">MARYIGPKAKLSRREGTDLFLKSARRSLDSKCKLDSKPGQHGRTSGARTSDYGNQLREKQKVKRMYGILERQFRRYFAEADRRKGNTGETLLKLLEARLDNVVYRMGFGSTRAEGRQLVSHKAFTVNGIVVNIASYQVKPGDVIAVREKSKKQVRIVEALSLAEQSGMPSWVSVDAKKMEGTYKAAPDRSEIANDVNESLIVELYSR</sequence>
<keyword id="KW-0687">Ribonucleoprotein</keyword>
<keyword id="KW-0689">Ribosomal protein</keyword>
<keyword id="KW-0694">RNA-binding</keyword>
<keyword id="KW-0699">rRNA-binding</keyword>
<protein>
    <recommendedName>
        <fullName evidence="1">Small ribosomal subunit protein uS4</fullName>
    </recommendedName>
    <alternativeName>
        <fullName evidence="3">30S ribosomal protein S4</fullName>
    </alternativeName>
</protein>
<evidence type="ECO:0000255" key="1">
    <source>
        <dbReference type="HAMAP-Rule" id="MF_01306"/>
    </source>
</evidence>
<evidence type="ECO:0000256" key="2">
    <source>
        <dbReference type="SAM" id="MobiDB-lite"/>
    </source>
</evidence>
<evidence type="ECO:0000305" key="3"/>
<accession>A6T3H9</accession>
<organism>
    <name type="scientific">Janthinobacterium sp. (strain Marseille)</name>
    <name type="common">Minibacterium massiliensis</name>
    <dbReference type="NCBI Taxonomy" id="375286"/>
    <lineage>
        <taxon>Bacteria</taxon>
        <taxon>Pseudomonadati</taxon>
        <taxon>Pseudomonadota</taxon>
        <taxon>Betaproteobacteria</taxon>
        <taxon>Burkholderiales</taxon>
        <taxon>Oxalobacteraceae</taxon>
        <taxon>Janthinobacterium</taxon>
    </lineage>
</organism>
<gene>
    <name evidence="1" type="primary">rpsD</name>
    <name type="ordered locus">mma_3386</name>
</gene>